<organism>
    <name type="scientific">Rattus norvegicus</name>
    <name type="common">Rat</name>
    <dbReference type="NCBI Taxonomy" id="10116"/>
    <lineage>
        <taxon>Eukaryota</taxon>
        <taxon>Metazoa</taxon>
        <taxon>Chordata</taxon>
        <taxon>Craniata</taxon>
        <taxon>Vertebrata</taxon>
        <taxon>Euteleostomi</taxon>
        <taxon>Mammalia</taxon>
        <taxon>Eutheria</taxon>
        <taxon>Euarchontoglires</taxon>
        <taxon>Glires</taxon>
        <taxon>Rodentia</taxon>
        <taxon>Myomorpha</taxon>
        <taxon>Muroidea</taxon>
        <taxon>Muridae</taxon>
        <taxon>Murinae</taxon>
        <taxon>Rattus</taxon>
    </lineage>
</organism>
<proteinExistence type="evidence at protein level"/>
<keyword id="KW-0012">Acyltransferase</keyword>
<keyword id="KW-0963">Cytoplasm</keyword>
<keyword id="KW-0256">Endoplasmic reticulum</keyword>
<keyword id="KW-0967">Endosome</keyword>
<keyword id="KW-0443">Lipid metabolism</keyword>
<keyword id="KW-0472">Membrane</keyword>
<keyword id="KW-1185">Reference proteome</keyword>
<keyword id="KW-0716">Sensory transduction</keyword>
<keyword id="KW-0808">Transferase</keyword>
<keyword id="KW-0812">Transmembrane</keyword>
<keyword id="KW-1133">Transmembrane helix</keyword>
<keyword id="KW-0844">Vision</keyword>
<dbReference type="EC" id="2.3.1.135"/>
<dbReference type="EMBL" id="AF255060">
    <property type="protein sequence ID" value="AAF97786.1"/>
    <property type="molecule type" value="mRNA"/>
</dbReference>
<dbReference type="RefSeq" id="NP_071616.1">
    <property type="nucleotide sequence ID" value="NM_022280.4"/>
</dbReference>
<dbReference type="SMR" id="Q9JI61"/>
<dbReference type="FunCoup" id="Q9JI61">
    <property type="interactions" value="115"/>
</dbReference>
<dbReference type="STRING" id="10116.ENSRNOP00000035053"/>
<dbReference type="ChEMBL" id="CHEMBL4523463"/>
<dbReference type="SwissLipids" id="SLP:000001908"/>
<dbReference type="PhosphoSitePlus" id="Q9JI61"/>
<dbReference type="PaxDb" id="10116-ENSRNOP00000035053"/>
<dbReference type="Ensembl" id="ENSRNOT00000035411.5">
    <property type="protein sequence ID" value="ENSRNOP00000035053.3"/>
    <property type="gene ID" value="ENSRNOG00000025608.5"/>
</dbReference>
<dbReference type="GeneID" id="64047"/>
<dbReference type="KEGG" id="rno:64047"/>
<dbReference type="AGR" id="RGD:68362"/>
<dbReference type="CTD" id="9227"/>
<dbReference type="RGD" id="68362">
    <property type="gene designation" value="Lrat"/>
</dbReference>
<dbReference type="eggNOG" id="ENOG502QWSA">
    <property type="taxonomic scope" value="Eukaryota"/>
</dbReference>
<dbReference type="GeneTree" id="ENSGT00510000047351"/>
<dbReference type="HOGENOM" id="CLU_105262_0_0_1"/>
<dbReference type="InParanoid" id="Q9JI61"/>
<dbReference type="OMA" id="PFCLWMV"/>
<dbReference type="OrthoDB" id="421951at2759"/>
<dbReference type="PhylomeDB" id="Q9JI61"/>
<dbReference type="TreeFam" id="TF330836"/>
<dbReference type="BRENDA" id="2.3.1.135">
    <property type="organism ID" value="5301"/>
</dbReference>
<dbReference type="Reactome" id="R-RNO-2453902">
    <property type="pathway name" value="The canonical retinoid cycle in rods (twilight vision)"/>
</dbReference>
<dbReference type="Reactome" id="R-RNO-975634">
    <property type="pathway name" value="Retinoid metabolism and transport"/>
</dbReference>
<dbReference type="UniPathway" id="UPA00912"/>
<dbReference type="PRO" id="PR:Q9JI61"/>
<dbReference type="Proteomes" id="UP000002494">
    <property type="component" value="Chromosome 2"/>
</dbReference>
<dbReference type="Bgee" id="ENSRNOG00000025608">
    <property type="expression patterns" value="Expressed in liver and 15 other cell types or tissues"/>
</dbReference>
<dbReference type="ExpressionAtlas" id="Q9JI61">
    <property type="expression patterns" value="baseline and differential"/>
</dbReference>
<dbReference type="GO" id="GO:0005783">
    <property type="term" value="C:endoplasmic reticulum"/>
    <property type="evidence" value="ECO:0000266"/>
    <property type="project" value="RGD"/>
</dbReference>
<dbReference type="GO" id="GO:0005789">
    <property type="term" value="C:endoplasmic reticulum membrane"/>
    <property type="evidence" value="ECO:0007669"/>
    <property type="project" value="UniProtKB-SubCell"/>
</dbReference>
<dbReference type="GO" id="GO:0005771">
    <property type="term" value="C:multivesicular body"/>
    <property type="evidence" value="ECO:0000314"/>
    <property type="project" value="UniProtKB"/>
</dbReference>
<dbReference type="GO" id="GO:0048471">
    <property type="term" value="C:perinuclear region of cytoplasm"/>
    <property type="evidence" value="ECO:0000314"/>
    <property type="project" value="UniProtKB"/>
</dbReference>
<dbReference type="GO" id="GO:0005791">
    <property type="term" value="C:rough endoplasmic reticulum"/>
    <property type="evidence" value="ECO:0000314"/>
    <property type="project" value="UniProtKB"/>
</dbReference>
<dbReference type="GO" id="GO:0008374">
    <property type="term" value="F:O-acyltransferase activity"/>
    <property type="evidence" value="ECO:0000266"/>
    <property type="project" value="RGD"/>
</dbReference>
<dbReference type="GO" id="GO:0016416">
    <property type="term" value="F:O-palmitoyltransferase activity"/>
    <property type="evidence" value="ECO:0000266"/>
    <property type="project" value="RGD"/>
</dbReference>
<dbReference type="GO" id="GO:0047173">
    <property type="term" value="F:phosphatidylcholine-retinol O-acyltransferase activity"/>
    <property type="evidence" value="ECO:0000314"/>
    <property type="project" value="RGD"/>
</dbReference>
<dbReference type="GO" id="GO:0001972">
    <property type="term" value="F:retinoic acid binding"/>
    <property type="evidence" value="ECO:0000314"/>
    <property type="project" value="RGD"/>
</dbReference>
<dbReference type="GO" id="GO:0019841">
    <property type="term" value="F:retinol binding"/>
    <property type="evidence" value="ECO:0000314"/>
    <property type="project" value="RGD"/>
</dbReference>
<dbReference type="GO" id="GO:1990830">
    <property type="term" value="P:cellular response to leukemia inhibitory factor"/>
    <property type="evidence" value="ECO:0000266"/>
    <property type="project" value="RGD"/>
</dbReference>
<dbReference type="GO" id="GO:0019915">
    <property type="term" value="P:lipid storage"/>
    <property type="evidence" value="ECO:0000266"/>
    <property type="project" value="RGD"/>
</dbReference>
<dbReference type="GO" id="GO:0051651">
    <property type="term" value="P:maintenance of location in cell"/>
    <property type="evidence" value="ECO:0000266"/>
    <property type="project" value="RGD"/>
</dbReference>
<dbReference type="GO" id="GO:0032370">
    <property type="term" value="P:positive regulation of lipid transport"/>
    <property type="evidence" value="ECO:0000266"/>
    <property type="project" value="RGD"/>
</dbReference>
<dbReference type="GO" id="GO:0009617">
    <property type="term" value="P:response to bacterium"/>
    <property type="evidence" value="ECO:0000266"/>
    <property type="project" value="RGD"/>
</dbReference>
<dbReference type="GO" id="GO:0032526">
    <property type="term" value="P:response to retinoic acid"/>
    <property type="evidence" value="ECO:0000270"/>
    <property type="project" value="RGD"/>
</dbReference>
<dbReference type="GO" id="GO:0033189">
    <property type="term" value="P:response to vitamin A"/>
    <property type="evidence" value="ECO:0000270"/>
    <property type="project" value="RGD"/>
</dbReference>
<dbReference type="GO" id="GO:0001523">
    <property type="term" value="P:retinoid metabolic process"/>
    <property type="evidence" value="ECO:0000266"/>
    <property type="project" value="RGD"/>
</dbReference>
<dbReference type="GO" id="GO:0042572">
    <property type="term" value="P:retinol metabolic process"/>
    <property type="evidence" value="ECO:0000314"/>
    <property type="project" value="RGD"/>
</dbReference>
<dbReference type="GO" id="GO:0007601">
    <property type="term" value="P:visual perception"/>
    <property type="evidence" value="ECO:0007669"/>
    <property type="project" value="UniProtKB-KW"/>
</dbReference>
<dbReference type="GO" id="GO:0006776">
    <property type="term" value="P:vitamin A metabolic process"/>
    <property type="evidence" value="ECO:0000266"/>
    <property type="project" value="RGD"/>
</dbReference>
<dbReference type="FunFam" id="3.90.1720.10:FF:000006">
    <property type="entry name" value="Lecithin retinol acyltransferase"/>
    <property type="match status" value="1"/>
</dbReference>
<dbReference type="Gene3D" id="3.90.1720.10">
    <property type="entry name" value="endopeptidase domain like (from Nostoc punctiforme)"/>
    <property type="match status" value="1"/>
</dbReference>
<dbReference type="InterPro" id="IPR042288">
    <property type="entry name" value="LRAT"/>
</dbReference>
<dbReference type="InterPro" id="IPR007053">
    <property type="entry name" value="LRAT_dom"/>
</dbReference>
<dbReference type="PANTHER" id="PTHR46678">
    <property type="entry name" value="LECITHIN RETINOL ACYLTRANSFERASE"/>
    <property type="match status" value="1"/>
</dbReference>
<dbReference type="PANTHER" id="PTHR46678:SF1">
    <property type="entry name" value="LECITHIN RETINOL ACYLTRANSFERASE"/>
    <property type="match status" value="1"/>
</dbReference>
<dbReference type="Pfam" id="PF04970">
    <property type="entry name" value="LRAT"/>
    <property type="match status" value="1"/>
</dbReference>
<dbReference type="PROSITE" id="PS51934">
    <property type="entry name" value="LRAT"/>
    <property type="match status" value="1"/>
</dbReference>
<feature type="chain" id="PRO_0000152480" description="Lecithin retinol acyltransferase">
    <location>
        <begin position="1"/>
        <end position="231"/>
    </location>
</feature>
<feature type="topological domain" description="Cytoplasmic" evidence="1">
    <location>
        <begin position="1"/>
        <end position="194"/>
    </location>
</feature>
<feature type="transmembrane region" description="Helical" evidence="4">
    <location>
        <begin position="195"/>
        <end position="215"/>
    </location>
</feature>
<feature type="topological domain" description="Lumenal" evidence="1">
    <location>
        <begin position="216"/>
        <end position="231"/>
    </location>
</feature>
<feature type="domain" description="LRAT" evidence="5">
    <location>
        <begin position="50"/>
        <end position="177"/>
    </location>
</feature>
<feature type="active site" evidence="5">
    <location>
        <position position="60"/>
    </location>
</feature>
<feature type="active site" evidence="5">
    <location>
        <position position="72"/>
    </location>
</feature>
<feature type="active site" description="Acyl-thioester intermediate" evidence="5">
    <location>
        <position position="161"/>
    </location>
</feature>
<sequence length="231" mass="25810">MKNSMLEAASLLLEKLLLISNFKIFSVCAPGGGTGKKHPYEINSFLRGDVLEVSRTHFTHYGIYLGDNRVAHLMPDILLALTSDKERTQKVVSNKRLLPGVICKVASIRVDTVEDFAYGADILVNHLDETLKKKSLLNEEVARRAEQQLGLTPYSLLWNNCEHFVTYCRYGSPISPQAEKFHETVKILIRDQRSCLASAVLGLVSIIYTGLASYMTLPAVCIPFCLWMMSG</sequence>
<gene>
    <name type="primary">Lrat</name>
</gene>
<evidence type="ECO:0000250" key="1"/>
<evidence type="ECO:0000250" key="2">
    <source>
        <dbReference type="UniProtKB" id="O95237"/>
    </source>
</evidence>
<evidence type="ECO:0000250" key="3">
    <source>
        <dbReference type="UniProtKB" id="Q9JI60"/>
    </source>
</evidence>
<evidence type="ECO:0000255" key="4"/>
<evidence type="ECO:0000255" key="5">
    <source>
        <dbReference type="PROSITE-ProRule" id="PRU01283"/>
    </source>
</evidence>
<evidence type="ECO:0000269" key="6">
    <source>
    </source>
</evidence>
<evidence type="ECO:0000269" key="7">
    <source>
    </source>
</evidence>
<evidence type="ECO:0000269" key="8">
    <source>
    </source>
</evidence>
<evidence type="ECO:0000269" key="9">
    <source>
    </source>
</evidence>
<evidence type="ECO:0000269" key="10">
    <source>
    </source>
</evidence>
<evidence type="ECO:0000305" key="11"/>
<evidence type="ECO:0000305" key="12">
    <source>
    </source>
</evidence>
<accession>Q9JI61</accession>
<protein>
    <recommendedName>
        <fullName>Lecithin retinol acyltransferase</fullName>
        <ecNumber>2.3.1.135</ecNumber>
    </recommendedName>
    <alternativeName>
        <fullName>Phosphatidylcholine--retinol O-acyltransferase</fullName>
    </alternativeName>
</protein>
<comment type="function">
    <text evidence="2 3 7 10">Transfers the acyl group from the sn-1 position of phosphatidylcholine to all-trans retinol, producing all-trans retinyl esters (PubMed:3410848). Retinyl esters are storage forms of vitamin A (By similarity). LRAT plays a critical role in vision (By similarity). It provides the all-trans retinyl ester substrates for the isomerohydrolase which processes the esters into 11-cis-retinol in the retinal pigment epithelium; due to a membrane-associated alcohol dehydrogenase, 11 cis-retinol is oxidized and converted into 11-cis-retinaldehyde which is the chromophore for rhodopsin and the cone photopigments (By similarity). Required for the survival of cone photoreceptors and correct rod photoreceptor cell morphology (By similarity).</text>
</comment>
<comment type="catalytic activity">
    <reaction evidence="3">
        <text>all-trans-retinol--[retinol-binding protein] + a 1,2-diacyl-sn-glycero-3-phosphocholine = apo--[retinol-binding protein] + an all-trans-retinyl ester + a 2-acyl-sn-glycero-3-phosphocholine</text>
        <dbReference type="Rhea" id="RHEA:17469"/>
        <dbReference type="Rhea" id="RHEA-COMP:14426"/>
        <dbReference type="Rhea" id="RHEA-COMP:14428"/>
        <dbReference type="ChEBI" id="CHEBI:17336"/>
        <dbReference type="ChEBI" id="CHEBI:57643"/>
        <dbReference type="ChEBI" id="CHEBI:57875"/>
        <dbReference type="ChEBI" id="CHEBI:63410"/>
        <dbReference type="ChEBI" id="CHEBI:83228"/>
        <dbReference type="EC" id="2.3.1.135"/>
    </reaction>
    <physiologicalReaction direction="left-to-right" evidence="3">
        <dbReference type="Rhea" id="RHEA:17470"/>
    </physiologicalReaction>
</comment>
<comment type="catalytic activity">
    <reaction evidence="7">
        <text>1,2-dihexadecanoyl-sn-glycero-3-phosphocholine + all-trans-retinol = all-trans-retinyl hexadecanoate + 2-hexadecanoyl-sn-glycero-3-phosphocholine</text>
        <dbReference type="Rhea" id="RHEA:43904"/>
        <dbReference type="ChEBI" id="CHEBI:17336"/>
        <dbReference type="ChEBI" id="CHEBI:17616"/>
        <dbReference type="ChEBI" id="CHEBI:72999"/>
        <dbReference type="ChEBI" id="CHEBI:76078"/>
    </reaction>
    <physiologicalReaction direction="left-to-right" evidence="12">
        <dbReference type="Rhea" id="RHEA:43905"/>
    </physiologicalReaction>
</comment>
<comment type="catalytic activity">
    <reaction evidence="3">
        <text>1,2-diheptanoyl-sn-glycero-3-phosphocholine + all-trans-retinol--[retinol-binding protein] = all-trans-retinyl heptanoate + 2-heptanoyl-sn-glycero-3-phosphocholine + apo--[retinol-binding protein]</text>
        <dbReference type="Rhea" id="RHEA:55320"/>
        <dbReference type="Rhea" id="RHEA-COMP:14426"/>
        <dbReference type="Rhea" id="RHEA-COMP:14428"/>
        <dbReference type="ChEBI" id="CHEBI:17336"/>
        <dbReference type="ChEBI" id="CHEBI:83228"/>
        <dbReference type="ChEBI" id="CHEBI:138195"/>
        <dbReference type="ChEBI" id="CHEBI:138266"/>
        <dbReference type="ChEBI" id="CHEBI:138724"/>
    </reaction>
    <physiologicalReaction direction="left-to-right" evidence="3">
        <dbReference type="Rhea" id="RHEA:55321"/>
    </physiologicalReaction>
</comment>
<comment type="catalytic activity">
    <reaction evidence="3">
        <text>1,2-dioctanoyl-sn-glycero-3-phosphocholine + all-trans-retinol--[retinol-binding protein] = 2-octanoyl-sn-glycero-3-phosphocholine + all-trans-retinyl octanoate + apo--[retinol-binding protein]</text>
        <dbReference type="Rhea" id="RHEA:56240"/>
        <dbReference type="Rhea" id="RHEA-COMP:14426"/>
        <dbReference type="Rhea" id="RHEA-COMP:14428"/>
        <dbReference type="ChEBI" id="CHEBI:17336"/>
        <dbReference type="ChEBI" id="CHEBI:78228"/>
        <dbReference type="ChEBI" id="CHEBI:83228"/>
        <dbReference type="ChEBI" id="CHEBI:140082"/>
        <dbReference type="ChEBI" id="CHEBI:140084"/>
    </reaction>
    <physiologicalReaction direction="left-to-right" evidence="3">
        <dbReference type="Rhea" id="RHEA:56241"/>
    </physiologicalReaction>
</comment>
<comment type="catalytic activity">
    <reaction evidence="3">
        <text>all-trans-retinol--[retinol-binding protein] + 1,2-dihexadecanoyl-sn-glycero-3-phosphocholine = apo--[retinol-binding protein] + all-trans-retinyl hexadecanoate + 2-hexadecanoyl-sn-glycero-3-phosphocholine</text>
        <dbReference type="Rhea" id="RHEA:56244"/>
        <dbReference type="Rhea" id="RHEA-COMP:14426"/>
        <dbReference type="Rhea" id="RHEA-COMP:14428"/>
        <dbReference type="ChEBI" id="CHEBI:17336"/>
        <dbReference type="ChEBI" id="CHEBI:17616"/>
        <dbReference type="ChEBI" id="CHEBI:72999"/>
        <dbReference type="ChEBI" id="CHEBI:76078"/>
        <dbReference type="ChEBI" id="CHEBI:83228"/>
    </reaction>
    <physiologicalReaction direction="left-to-right" evidence="3">
        <dbReference type="Rhea" id="RHEA:56245"/>
    </physiologicalReaction>
</comment>
<comment type="catalytic activity">
    <reaction evidence="3">
        <text>1,2-didodecanoyl-sn-glycero-3-phosphocholine + all-trans-retinol--[retinol-binding protein] = 2-dodecanoyl-sn-glycero-3-phosphocholine + all-trans-retinyl dodecanoate + apo--[retinol-binding protein]</text>
        <dbReference type="Rhea" id="RHEA:56248"/>
        <dbReference type="Rhea" id="RHEA-COMP:14426"/>
        <dbReference type="Rhea" id="RHEA-COMP:14428"/>
        <dbReference type="ChEBI" id="CHEBI:17336"/>
        <dbReference type="ChEBI" id="CHEBI:65211"/>
        <dbReference type="ChEBI" id="CHEBI:83228"/>
        <dbReference type="ChEBI" id="CHEBI:140088"/>
        <dbReference type="ChEBI" id="CHEBI:140089"/>
    </reaction>
    <physiologicalReaction direction="left-to-right" evidence="3">
        <dbReference type="Rhea" id="RHEA:56249"/>
    </physiologicalReaction>
</comment>
<comment type="activity regulation">
    <text evidence="1">Inhibited by all-trans-retinyl alpha-bromoacetate and N-boc-L-biocytinyl-11-aminoundecane chloro-methyl ketone (BACMK).</text>
</comment>
<comment type="pathway">
    <text>Cofactor metabolism; retinol metabolism.</text>
</comment>
<comment type="subcellular location">
    <subcellularLocation>
        <location evidence="1">Endoplasmic reticulum membrane</location>
        <topology evidence="1">Single-pass membrane protein</topology>
    </subcellularLocation>
    <subcellularLocation>
        <location evidence="8">Rough endoplasmic reticulum</location>
    </subcellularLocation>
    <subcellularLocation>
        <location evidence="8">Endosome</location>
        <location evidence="8">Multivesicular body</location>
    </subcellularLocation>
    <subcellularLocation>
        <location evidence="8">Cytoplasm</location>
        <location evidence="8">Perinuclear region</location>
    </subcellularLocation>
    <text>Present in the rough endoplasmic reticulum and multivesicular body in hepatic stellate cells. Present in the rough endoplasmic reticulum and perinuclear region in endothelial cells.</text>
</comment>
<comment type="tissue specificity">
    <text evidence="6 8">Hepatic stellate cells and endothelial cells (at protein level). Highly expressed in adrenal gland, small intestine, testis and eye. Lower levels of expression are observed in liver, heart, lung, skin, mammary tissue and skeletal muscle.</text>
</comment>
<comment type="induction">
    <text evidence="6 9">LRAT activity is up-regulated by dietary vitamin A. Under conditions of vitamin A depletion, LRAT expression in the liver is induced by retinoic acid.</text>
</comment>
<comment type="similarity">
    <text evidence="11">Belongs to the H-rev107 family.</text>
</comment>
<name>LRAT_RAT</name>
<reference key="1">
    <citation type="journal article" date="2000" name="J. Lipid Res.">
        <title>Lecithin:retinol acyltransferase from mouse and rat liver. cDNA cloning and liver-specific regulation by dietary vitamin A and retinoic acid.</title>
        <authorList>
            <person name="Zolfaghari R."/>
            <person name="Ross A.C."/>
        </authorList>
    </citation>
    <scope>NUCLEOTIDE SEQUENCE [MRNA]</scope>
    <scope>TISSUE SPECIFICITY</scope>
    <scope>INDUCTION BY RETINOIC ACID AND VITAMIN A</scope>
    <source>
        <strain>Lewis</strain>
        <tissue>Liver</tissue>
    </source>
</reference>
<reference key="2">
    <citation type="journal article" date="1988" name="J. Biol. Chem.">
        <title>Evidence for a lecithin-retinol acyltransferase activity in the rat small intestine.</title>
        <authorList>
            <person name="MacDonald P.N."/>
            <person name="Ong D.E."/>
        </authorList>
    </citation>
    <scope>FUNCTION</scope>
</reference>
<reference key="3">
    <citation type="journal article" date="1991" name="J. Biol. Chem.">
        <title>Vitamin A status regulates hepatic lecithin:retinol acyltransferase activity in rats.</title>
        <authorList>
            <person name="Randolph R.K."/>
            <person name="Ross A.C."/>
        </authorList>
    </citation>
    <scope>INDUCTION BY VITAMIN A</scope>
</reference>
<reference key="4">
    <citation type="journal article" date="2007" name="J. Biol. Chem.">
        <title>Discovery and characterization of a Ca2+-independent phosphatidylethanolamine N-acyltransferase generating the anandamide precursor and its congeners.</title>
        <authorList>
            <person name="Jin X.H."/>
            <person name="Okamoto Y."/>
            <person name="Morishita J."/>
            <person name="Tsuboi K."/>
            <person name="Tonai T."/>
            <person name="Ueda N."/>
        </authorList>
    </citation>
    <scope>FUNCTION</scope>
    <scope>CATALYTIC ACTIVITY</scope>
</reference>
<reference key="5">
    <citation type="journal article" date="2009" name="Liver Int.">
        <title>Lecithin: retinol acyltransferase protein is distributed in both hepatic stellate cells and endothelial cells of normal rodent and human liver.</title>
        <authorList>
            <person name="Nagatsuma K."/>
            <person name="Hayashi Y."/>
            <person name="Hano H."/>
            <person name="Sagara H."/>
            <person name="Murakami K."/>
            <person name="Saito M."/>
            <person name="Masaki T."/>
            <person name="Lu T."/>
            <person name="Tanaka M."/>
            <person name="Enzan H."/>
            <person name="Aizawa Y."/>
            <person name="Tajiri H."/>
            <person name="Matsuura T."/>
        </authorList>
    </citation>
    <scope>SUBCELLULAR LOCATION</scope>
    <scope>TISSUE SPECIFICITY</scope>
</reference>